<reference key="1">
    <citation type="journal article" date="2006" name="J. Bacteriol.">
        <title>The genome sequence of the obligately chemolithoautotrophic, facultatively anaerobic bacterium Thiobacillus denitrificans.</title>
        <authorList>
            <person name="Beller H.R."/>
            <person name="Chain P.S."/>
            <person name="Letain T.E."/>
            <person name="Chakicherla A."/>
            <person name="Larimer F.W."/>
            <person name="Richardson P.M."/>
            <person name="Coleman M.A."/>
            <person name="Wood A.P."/>
            <person name="Kelly D.P."/>
        </authorList>
    </citation>
    <scope>NUCLEOTIDE SEQUENCE [LARGE SCALE GENOMIC DNA]</scope>
    <source>
        <strain>ATCC 25259 / T1</strain>
    </source>
</reference>
<evidence type="ECO:0000255" key="1">
    <source>
        <dbReference type="HAMAP-Rule" id="MF_01023"/>
    </source>
</evidence>
<dbReference type="EC" id="2.6.1.9" evidence="1"/>
<dbReference type="EMBL" id="CP000116">
    <property type="protein sequence ID" value="AAZ97665.1"/>
    <property type="molecule type" value="Genomic_DNA"/>
</dbReference>
<dbReference type="RefSeq" id="WP_011312224.1">
    <property type="nucleotide sequence ID" value="NC_007404.1"/>
</dbReference>
<dbReference type="SMR" id="Q3SI68"/>
<dbReference type="STRING" id="292415.Tbd_1712"/>
<dbReference type="KEGG" id="tbd:Tbd_1712"/>
<dbReference type="eggNOG" id="COG0079">
    <property type="taxonomic scope" value="Bacteria"/>
</dbReference>
<dbReference type="HOGENOM" id="CLU_017584_3_0_4"/>
<dbReference type="OrthoDB" id="9809616at2"/>
<dbReference type="UniPathway" id="UPA00031">
    <property type="reaction ID" value="UER00012"/>
</dbReference>
<dbReference type="Proteomes" id="UP000008291">
    <property type="component" value="Chromosome"/>
</dbReference>
<dbReference type="GO" id="GO:0004400">
    <property type="term" value="F:histidinol-phosphate transaminase activity"/>
    <property type="evidence" value="ECO:0007669"/>
    <property type="project" value="UniProtKB-UniRule"/>
</dbReference>
<dbReference type="GO" id="GO:0030170">
    <property type="term" value="F:pyridoxal phosphate binding"/>
    <property type="evidence" value="ECO:0007669"/>
    <property type="project" value="InterPro"/>
</dbReference>
<dbReference type="GO" id="GO:0000105">
    <property type="term" value="P:L-histidine biosynthetic process"/>
    <property type="evidence" value="ECO:0007669"/>
    <property type="project" value="UniProtKB-UniRule"/>
</dbReference>
<dbReference type="CDD" id="cd00609">
    <property type="entry name" value="AAT_like"/>
    <property type="match status" value="1"/>
</dbReference>
<dbReference type="Gene3D" id="3.90.1150.10">
    <property type="entry name" value="Aspartate Aminotransferase, domain 1"/>
    <property type="match status" value="1"/>
</dbReference>
<dbReference type="Gene3D" id="3.40.640.10">
    <property type="entry name" value="Type I PLP-dependent aspartate aminotransferase-like (Major domain)"/>
    <property type="match status" value="1"/>
</dbReference>
<dbReference type="HAMAP" id="MF_01023">
    <property type="entry name" value="HisC_aminotrans_2"/>
    <property type="match status" value="1"/>
</dbReference>
<dbReference type="InterPro" id="IPR004839">
    <property type="entry name" value="Aminotransferase_I/II_large"/>
</dbReference>
<dbReference type="InterPro" id="IPR005861">
    <property type="entry name" value="HisP_aminotrans"/>
</dbReference>
<dbReference type="InterPro" id="IPR015424">
    <property type="entry name" value="PyrdxlP-dep_Trfase"/>
</dbReference>
<dbReference type="InterPro" id="IPR015421">
    <property type="entry name" value="PyrdxlP-dep_Trfase_major"/>
</dbReference>
<dbReference type="InterPro" id="IPR015422">
    <property type="entry name" value="PyrdxlP-dep_Trfase_small"/>
</dbReference>
<dbReference type="NCBIfam" id="TIGR01141">
    <property type="entry name" value="hisC"/>
    <property type="match status" value="1"/>
</dbReference>
<dbReference type="PANTHER" id="PTHR42885:SF2">
    <property type="entry name" value="HISTIDINOL-PHOSPHATE AMINOTRANSFERASE"/>
    <property type="match status" value="1"/>
</dbReference>
<dbReference type="PANTHER" id="PTHR42885">
    <property type="entry name" value="HISTIDINOL-PHOSPHATE AMINOTRANSFERASE-RELATED"/>
    <property type="match status" value="1"/>
</dbReference>
<dbReference type="Pfam" id="PF00155">
    <property type="entry name" value="Aminotran_1_2"/>
    <property type="match status" value="1"/>
</dbReference>
<dbReference type="SUPFAM" id="SSF53383">
    <property type="entry name" value="PLP-dependent transferases"/>
    <property type="match status" value="1"/>
</dbReference>
<organism>
    <name type="scientific">Thiobacillus denitrificans (strain ATCC 25259 / T1)</name>
    <dbReference type="NCBI Taxonomy" id="292415"/>
    <lineage>
        <taxon>Bacteria</taxon>
        <taxon>Pseudomonadati</taxon>
        <taxon>Pseudomonadota</taxon>
        <taxon>Betaproteobacteria</taxon>
        <taxon>Nitrosomonadales</taxon>
        <taxon>Thiobacillaceae</taxon>
        <taxon>Thiobacillus</taxon>
    </lineage>
</organism>
<name>HIS82_THIDA</name>
<comment type="catalytic activity">
    <reaction evidence="1">
        <text>L-histidinol phosphate + 2-oxoglutarate = 3-(imidazol-4-yl)-2-oxopropyl phosphate + L-glutamate</text>
        <dbReference type="Rhea" id="RHEA:23744"/>
        <dbReference type="ChEBI" id="CHEBI:16810"/>
        <dbReference type="ChEBI" id="CHEBI:29985"/>
        <dbReference type="ChEBI" id="CHEBI:57766"/>
        <dbReference type="ChEBI" id="CHEBI:57980"/>
        <dbReference type="EC" id="2.6.1.9"/>
    </reaction>
</comment>
<comment type="cofactor">
    <cofactor evidence="1">
        <name>pyridoxal 5'-phosphate</name>
        <dbReference type="ChEBI" id="CHEBI:597326"/>
    </cofactor>
</comment>
<comment type="pathway">
    <text evidence="1">Amino-acid biosynthesis; L-histidine biosynthesis; L-histidine from 5-phospho-alpha-D-ribose 1-diphosphate: step 7/9.</text>
</comment>
<comment type="subunit">
    <text evidence="1">Homodimer.</text>
</comment>
<comment type="similarity">
    <text evidence="1">Belongs to the class-II pyridoxal-phosphate-dependent aminotransferase family. Histidinol-phosphate aminotransferase subfamily.</text>
</comment>
<protein>
    <recommendedName>
        <fullName evidence="1">Histidinol-phosphate aminotransferase 2</fullName>
        <ecNumber evidence="1">2.6.1.9</ecNumber>
    </recommendedName>
    <alternativeName>
        <fullName evidence="1">Imidazole acetol-phosphate transaminase 2</fullName>
    </alternativeName>
</protein>
<gene>
    <name evidence="1" type="primary">hisC2</name>
    <name type="ordered locus">Tbd_1712</name>
</gene>
<proteinExistence type="inferred from homology"/>
<sequence length="357" mass="38963">MSRTSTSRYWSAVVGALTPYVPGEQPKLANLVKLNTNENPYGPSPRVLEALRGEVGDTLRLYPDPNSDRLRAAIAAYHAVSPDQVFVGNGSDEVLAHTFLALLKHERPVFFPDITYSFYPVYCGLYGIAHRAIPLDDAFEIRVDDYLAPKGGVIFPNPNAPTGRLLALGEIERLLAANRDSVVVIDEAYVDFGGDSAVPLVARHPQLLVTRTLSKSHALAGLRVGYAVGQAPLIEALNRVKDSFNSYPLDRFAQAGALASIEDRAYFESICARVIATRTRLVDAMESLGFEVLPSAANFIFARHPAHDGEALAARLRERSIIVRHFKNPARIAPFLRITVGTDAQCDALVDALKALC</sequence>
<accession>Q3SI68</accession>
<feature type="chain" id="PRO_0000153472" description="Histidinol-phosphate aminotransferase 2">
    <location>
        <begin position="1"/>
        <end position="357"/>
    </location>
</feature>
<feature type="modified residue" description="N6-(pyridoxal phosphate)lysine" evidence="1">
    <location>
        <position position="215"/>
    </location>
</feature>
<keyword id="KW-0028">Amino-acid biosynthesis</keyword>
<keyword id="KW-0032">Aminotransferase</keyword>
<keyword id="KW-0368">Histidine biosynthesis</keyword>
<keyword id="KW-0663">Pyridoxal phosphate</keyword>
<keyword id="KW-1185">Reference proteome</keyword>
<keyword id="KW-0808">Transferase</keyword>